<dbReference type="EC" id="1.1.5.3"/>
<dbReference type="EMBL" id="AL123456">
    <property type="protein sequence ID" value="CCP45029.1"/>
    <property type="molecule type" value="Genomic_DNA"/>
</dbReference>
<dbReference type="PIR" id="E70779">
    <property type="entry name" value="E70779"/>
</dbReference>
<dbReference type="RefSeq" id="NP_216765.1">
    <property type="nucleotide sequence ID" value="NC_000962.3"/>
</dbReference>
<dbReference type="RefSeq" id="WP_003411591.1">
    <property type="nucleotide sequence ID" value="NZ_NVQJ01000008.1"/>
</dbReference>
<dbReference type="SMR" id="P9WN81"/>
<dbReference type="STRING" id="83332.Rv2249c"/>
<dbReference type="PaxDb" id="83332-Rv2249c"/>
<dbReference type="DNASU" id="887276"/>
<dbReference type="GeneID" id="887276"/>
<dbReference type="KEGG" id="mtu:Rv2249c"/>
<dbReference type="KEGG" id="mtv:RVBD_2249c"/>
<dbReference type="PATRIC" id="fig|83332.111.peg.2503"/>
<dbReference type="TubercuList" id="Rv2249c"/>
<dbReference type="eggNOG" id="COG0578">
    <property type="taxonomic scope" value="Bacteria"/>
</dbReference>
<dbReference type="InParanoid" id="P9WN81"/>
<dbReference type="OrthoDB" id="9766796at2"/>
<dbReference type="PhylomeDB" id="P9WN81"/>
<dbReference type="Proteomes" id="UP000001584">
    <property type="component" value="Chromosome"/>
</dbReference>
<dbReference type="GO" id="GO:0005737">
    <property type="term" value="C:cytoplasm"/>
    <property type="evidence" value="ECO:0007669"/>
    <property type="project" value="UniProtKB-SubCell"/>
</dbReference>
<dbReference type="GO" id="GO:0009274">
    <property type="term" value="C:peptidoglycan-based cell wall"/>
    <property type="evidence" value="ECO:0007005"/>
    <property type="project" value="MTBBASE"/>
</dbReference>
<dbReference type="GO" id="GO:0005886">
    <property type="term" value="C:plasma membrane"/>
    <property type="evidence" value="ECO:0007005"/>
    <property type="project" value="MTBBASE"/>
</dbReference>
<dbReference type="GO" id="GO:0004368">
    <property type="term" value="F:glycerol-3-phosphate dehydrogenase (quinone) activity"/>
    <property type="evidence" value="ECO:0000318"/>
    <property type="project" value="GO_Central"/>
</dbReference>
<dbReference type="GO" id="GO:0006071">
    <property type="term" value="P:glycerol metabolic process"/>
    <property type="evidence" value="ECO:0007669"/>
    <property type="project" value="UniProtKB-KW"/>
</dbReference>
<dbReference type="GO" id="GO:0046168">
    <property type="term" value="P:glycerol-3-phosphate catabolic process"/>
    <property type="evidence" value="ECO:0000318"/>
    <property type="project" value="GO_Central"/>
</dbReference>
<dbReference type="FunFam" id="1.10.8.870:FF:000012">
    <property type="entry name" value="Glycerol-3-phosphate dehydrogenase"/>
    <property type="match status" value="1"/>
</dbReference>
<dbReference type="Gene3D" id="1.10.8.870">
    <property type="entry name" value="Alpha-glycerophosphate oxidase, cap domain"/>
    <property type="match status" value="1"/>
</dbReference>
<dbReference type="Gene3D" id="3.30.9.10">
    <property type="entry name" value="D-Amino Acid Oxidase, subunit A, domain 2"/>
    <property type="match status" value="1"/>
</dbReference>
<dbReference type="Gene3D" id="3.50.50.60">
    <property type="entry name" value="FAD/NAD(P)-binding domain"/>
    <property type="match status" value="1"/>
</dbReference>
<dbReference type="InterPro" id="IPR031656">
    <property type="entry name" value="DAO_C"/>
</dbReference>
<dbReference type="InterPro" id="IPR038299">
    <property type="entry name" value="DAO_C_sf"/>
</dbReference>
<dbReference type="InterPro" id="IPR006076">
    <property type="entry name" value="FAD-dep_OxRdtase"/>
</dbReference>
<dbReference type="InterPro" id="IPR036188">
    <property type="entry name" value="FAD/NAD-bd_sf"/>
</dbReference>
<dbReference type="InterPro" id="IPR000447">
    <property type="entry name" value="G3P_DH_FAD-dep"/>
</dbReference>
<dbReference type="PANTHER" id="PTHR11985:SF35">
    <property type="entry name" value="ANAEROBIC GLYCEROL-3-PHOSPHATE DEHYDROGENASE SUBUNIT A"/>
    <property type="match status" value="1"/>
</dbReference>
<dbReference type="PANTHER" id="PTHR11985">
    <property type="entry name" value="GLYCEROL-3-PHOSPHATE DEHYDROGENASE"/>
    <property type="match status" value="1"/>
</dbReference>
<dbReference type="Pfam" id="PF01266">
    <property type="entry name" value="DAO"/>
    <property type="match status" value="1"/>
</dbReference>
<dbReference type="Pfam" id="PF16901">
    <property type="entry name" value="DAO_C"/>
    <property type="match status" value="1"/>
</dbReference>
<dbReference type="PRINTS" id="PR01001">
    <property type="entry name" value="FADG3PDH"/>
</dbReference>
<dbReference type="SUPFAM" id="SSF51905">
    <property type="entry name" value="FAD/NAD(P)-binding domain"/>
    <property type="match status" value="1"/>
</dbReference>
<dbReference type="PROSITE" id="PS00977">
    <property type="entry name" value="FAD_G3PDH_1"/>
    <property type="match status" value="1"/>
</dbReference>
<dbReference type="PROSITE" id="PS00978">
    <property type="entry name" value="FAD_G3PDH_2"/>
    <property type="match status" value="1"/>
</dbReference>
<reference key="1">
    <citation type="journal article" date="1998" name="Nature">
        <title>Deciphering the biology of Mycobacterium tuberculosis from the complete genome sequence.</title>
        <authorList>
            <person name="Cole S.T."/>
            <person name="Brosch R."/>
            <person name="Parkhill J."/>
            <person name="Garnier T."/>
            <person name="Churcher C.M."/>
            <person name="Harris D.E."/>
            <person name="Gordon S.V."/>
            <person name="Eiglmeier K."/>
            <person name="Gas S."/>
            <person name="Barry C.E. III"/>
            <person name="Tekaia F."/>
            <person name="Badcock K."/>
            <person name="Basham D."/>
            <person name="Brown D."/>
            <person name="Chillingworth T."/>
            <person name="Connor R."/>
            <person name="Davies R.M."/>
            <person name="Devlin K."/>
            <person name="Feltwell T."/>
            <person name="Gentles S."/>
            <person name="Hamlin N."/>
            <person name="Holroyd S."/>
            <person name="Hornsby T."/>
            <person name="Jagels K."/>
            <person name="Krogh A."/>
            <person name="McLean J."/>
            <person name="Moule S."/>
            <person name="Murphy L.D."/>
            <person name="Oliver S."/>
            <person name="Osborne J."/>
            <person name="Quail M.A."/>
            <person name="Rajandream M.A."/>
            <person name="Rogers J."/>
            <person name="Rutter S."/>
            <person name="Seeger K."/>
            <person name="Skelton S."/>
            <person name="Squares S."/>
            <person name="Squares R."/>
            <person name="Sulston J.E."/>
            <person name="Taylor K."/>
            <person name="Whitehead S."/>
            <person name="Barrell B.G."/>
        </authorList>
    </citation>
    <scope>NUCLEOTIDE SEQUENCE [LARGE SCALE GENOMIC DNA]</scope>
    <source>
        <strain>ATCC 25618 / H37Rv</strain>
    </source>
</reference>
<reference key="2">
    <citation type="journal article" date="2011" name="Mol. Cell. Proteomics">
        <title>Proteogenomic analysis of Mycobacterium tuberculosis by high resolution mass spectrometry.</title>
        <authorList>
            <person name="Kelkar D.S."/>
            <person name="Kumar D."/>
            <person name="Kumar P."/>
            <person name="Balakrishnan L."/>
            <person name="Muthusamy B."/>
            <person name="Yadav A.K."/>
            <person name="Shrivastava P."/>
            <person name="Marimuthu A."/>
            <person name="Anand S."/>
            <person name="Sundaram H."/>
            <person name="Kingsbury R."/>
            <person name="Harsha H.C."/>
            <person name="Nair B."/>
            <person name="Prasad T.S."/>
            <person name="Chauhan D.S."/>
            <person name="Katoch K."/>
            <person name="Katoch V.M."/>
            <person name="Kumar P."/>
            <person name="Chaerkady R."/>
            <person name="Ramachandran S."/>
            <person name="Dash D."/>
            <person name="Pandey A."/>
        </authorList>
    </citation>
    <scope>IDENTIFICATION BY MASS SPECTROMETRY [LARGE SCALE ANALYSIS]</scope>
    <source>
        <strain>ATCC 25618 / H37Rv</strain>
    </source>
</reference>
<accession>P9WN81</accession>
<accession>L0T922</accession>
<accession>P64182</accession>
<accession>Q10502</accession>
<feature type="chain" id="PRO_0000126100" description="Glycerol-3-phosphate dehydrogenase 1">
    <location>
        <begin position="1"/>
        <end position="516"/>
    </location>
</feature>
<feature type="binding site" evidence="1">
    <location>
        <begin position="28"/>
        <end position="56"/>
    </location>
    <ligand>
        <name>FAD</name>
        <dbReference type="ChEBI" id="CHEBI:57692"/>
    </ligand>
</feature>
<keyword id="KW-0963">Cytoplasm</keyword>
<keyword id="KW-0274">FAD</keyword>
<keyword id="KW-0285">Flavoprotein</keyword>
<keyword id="KW-0319">Glycerol metabolism</keyword>
<keyword id="KW-0560">Oxidoreductase</keyword>
<keyword id="KW-1185">Reference proteome</keyword>
<organism>
    <name type="scientific">Mycobacterium tuberculosis (strain ATCC 25618 / H37Rv)</name>
    <dbReference type="NCBI Taxonomy" id="83332"/>
    <lineage>
        <taxon>Bacteria</taxon>
        <taxon>Bacillati</taxon>
        <taxon>Actinomycetota</taxon>
        <taxon>Actinomycetes</taxon>
        <taxon>Mycobacteriales</taxon>
        <taxon>Mycobacteriaceae</taxon>
        <taxon>Mycobacterium</taxon>
        <taxon>Mycobacterium tuberculosis complex</taxon>
    </lineage>
</organism>
<sequence>MLMPHSAALNAARRSADLTALADGGALDVIVIGGGITGVGIALDAATRGLTVALVEKHDLAFGTSRWSSKLVHGGLRYLASGNVGIARRSAVERGILMTRNAPHLVHAMPQLVPLLPSMGHTKRALVRAGFLAGDALRVLAGTPAATLPRSRRIPASRVVEIAPTVRRDGLDGGLLAYDGQLIDDARLVMAVARTAAQHGARILTYVGASNVTGTSVELTDRRTRQSFALSARAVINAAGVWAGEIDPSLRLRPSRGTHLVFDAKSFANPTAALTIPIPGELNRFVFAMPEQLGRIYLGLTDEDAPGPIPDVPQPSSEEITFLLDTVNTALGTAVGTKDVIGAYAGLRPLIDTGGAGVQGRTADVSRDHAVFESPSGVISVVGGKLTEYRYMAEDVLNRAITLRHLRAAKCRTRNLPLIGAPANPGPAPGSGAGLPESLVARYGAEAANVAAAATCERPTEPVADGIDVTRAEFEYAVTHEGALDVDDILDRRTRIGLVPRDRERVVAVAKEFLSR</sequence>
<comment type="catalytic activity">
    <reaction>
        <text>a quinone + sn-glycerol 3-phosphate = dihydroxyacetone phosphate + a quinol</text>
        <dbReference type="Rhea" id="RHEA:18977"/>
        <dbReference type="ChEBI" id="CHEBI:24646"/>
        <dbReference type="ChEBI" id="CHEBI:57597"/>
        <dbReference type="ChEBI" id="CHEBI:57642"/>
        <dbReference type="ChEBI" id="CHEBI:132124"/>
        <dbReference type="EC" id="1.1.5.3"/>
    </reaction>
</comment>
<comment type="cofactor">
    <cofactor evidence="1">
        <name>FAD</name>
        <dbReference type="ChEBI" id="CHEBI:57692"/>
    </cofactor>
</comment>
<comment type="subcellular location">
    <subcellularLocation>
        <location evidence="1">Cytoplasm</location>
    </subcellularLocation>
</comment>
<comment type="similarity">
    <text evidence="2">Belongs to the FAD-dependent glycerol-3-phosphate dehydrogenase family.</text>
</comment>
<evidence type="ECO:0000250" key="1"/>
<evidence type="ECO:0000305" key="2"/>
<protein>
    <recommendedName>
        <fullName>Glycerol-3-phosphate dehydrogenase 1</fullName>
        <ecNumber>1.1.5.3</ecNumber>
    </recommendedName>
</protein>
<gene>
    <name type="primary">glpD1</name>
    <name type="synonym">glpD</name>
    <name type="ordered locus">Rv2249c</name>
    <name type="ORF">MTCY427.31c</name>
</gene>
<name>GLPD1_MYCTU</name>
<proteinExistence type="evidence at protein level"/>